<protein>
    <recommendedName>
        <fullName evidence="3">PHD finger protein 23A</fullName>
    </recommendedName>
</protein>
<keyword id="KW-0072">Autophagy</keyword>
<keyword id="KW-0963">Cytoplasm</keyword>
<keyword id="KW-0479">Metal-binding</keyword>
<keyword id="KW-0539">Nucleus</keyword>
<keyword id="KW-1185">Reference proteome</keyword>
<keyword id="KW-0862">Zinc</keyword>
<keyword id="KW-0863">Zinc-finger</keyword>
<feature type="chain" id="PRO_0000302833" description="PHD finger protein 23A">
    <location>
        <begin position="1"/>
        <end position="296"/>
    </location>
</feature>
<feature type="zinc finger region" description="PHD-type">
    <location>
        <begin position="239"/>
        <end position="287"/>
    </location>
</feature>
<feature type="region of interest" description="Disordered" evidence="2">
    <location>
        <begin position="50"/>
        <end position="80"/>
    </location>
</feature>
<accession>Q5BJ10</accession>
<proteinExistence type="evidence at transcript level"/>
<reference key="1">
    <citation type="journal article" date="2013" name="Nature">
        <title>The zebrafish reference genome sequence and its relationship to the human genome.</title>
        <authorList>
            <person name="Howe K."/>
            <person name="Clark M.D."/>
            <person name="Torroja C.F."/>
            <person name="Torrance J."/>
            <person name="Berthelot C."/>
            <person name="Muffato M."/>
            <person name="Collins J.E."/>
            <person name="Humphray S."/>
            <person name="McLaren K."/>
            <person name="Matthews L."/>
            <person name="McLaren S."/>
            <person name="Sealy I."/>
            <person name="Caccamo M."/>
            <person name="Churcher C."/>
            <person name="Scott C."/>
            <person name="Barrett J.C."/>
            <person name="Koch R."/>
            <person name="Rauch G.J."/>
            <person name="White S."/>
            <person name="Chow W."/>
            <person name="Kilian B."/>
            <person name="Quintais L.T."/>
            <person name="Guerra-Assuncao J.A."/>
            <person name="Zhou Y."/>
            <person name="Gu Y."/>
            <person name="Yen J."/>
            <person name="Vogel J.H."/>
            <person name="Eyre T."/>
            <person name="Redmond S."/>
            <person name="Banerjee R."/>
            <person name="Chi J."/>
            <person name="Fu B."/>
            <person name="Langley E."/>
            <person name="Maguire S.F."/>
            <person name="Laird G.K."/>
            <person name="Lloyd D."/>
            <person name="Kenyon E."/>
            <person name="Donaldson S."/>
            <person name="Sehra H."/>
            <person name="Almeida-King J."/>
            <person name="Loveland J."/>
            <person name="Trevanion S."/>
            <person name="Jones M."/>
            <person name="Quail M."/>
            <person name="Willey D."/>
            <person name="Hunt A."/>
            <person name="Burton J."/>
            <person name="Sims S."/>
            <person name="McLay K."/>
            <person name="Plumb B."/>
            <person name="Davis J."/>
            <person name="Clee C."/>
            <person name="Oliver K."/>
            <person name="Clark R."/>
            <person name="Riddle C."/>
            <person name="Elliot D."/>
            <person name="Threadgold G."/>
            <person name="Harden G."/>
            <person name="Ware D."/>
            <person name="Begum S."/>
            <person name="Mortimore B."/>
            <person name="Kerry G."/>
            <person name="Heath P."/>
            <person name="Phillimore B."/>
            <person name="Tracey A."/>
            <person name="Corby N."/>
            <person name="Dunn M."/>
            <person name="Johnson C."/>
            <person name="Wood J."/>
            <person name="Clark S."/>
            <person name="Pelan S."/>
            <person name="Griffiths G."/>
            <person name="Smith M."/>
            <person name="Glithero R."/>
            <person name="Howden P."/>
            <person name="Barker N."/>
            <person name="Lloyd C."/>
            <person name="Stevens C."/>
            <person name="Harley J."/>
            <person name="Holt K."/>
            <person name="Panagiotidis G."/>
            <person name="Lovell J."/>
            <person name="Beasley H."/>
            <person name="Henderson C."/>
            <person name="Gordon D."/>
            <person name="Auger K."/>
            <person name="Wright D."/>
            <person name="Collins J."/>
            <person name="Raisen C."/>
            <person name="Dyer L."/>
            <person name="Leung K."/>
            <person name="Robertson L."/>
            <person name="Ambridge K."/>
            <person name="Leongamornlert D."/>
            <person name="McGuire S."/>
            <person name="Gilderthorp R."/>
            <person name="Griffiths C."/>
            <person name="Manthravadi D."/>
            <person name="Nichol S."/>
            <person name="Barker G."/>
            <person name="Whitehead S."/>
            <person name="Kay M."/>
            <person name="Brown J."/>
            <person name="Murnane C."/>
            <person name="Gray E."/>
            <person name="Humphries M."/>
            <person name="Sycamore N."/>
            <person name="Barker D."/>
            <person name="Saunders D."/>
            <person name="Wallis J."/>
            <person name="Babbage A."/>
            <person name="Hammond S."/>
            <person name="Mashreghi-Mohammadi M."/>
            <person name="Barr L."/>
            <person name="Martin S."/>
            <person name="Wray P."/>
            <person name="Ellington A."/>
            <person name="Matthews N."/>
            <person name="Ellwood M."/>
            <person name="Woodmansey R."/>
            <person name="Clark G."/>
            <person name="Cooper J."/>
            <person name="Tromans A."/>
            <person name="Grafham D."/>
            <person name="Skuce C."/>
            <person name="Pandian R."/>
            <person name="Andrews R."/>
            <person name="Harrison E."/>
            <person name="Kimberley A."/>
            <person name="Garnett J."/>
            <person name="Fosker N."/>
            <person name="Hall R."/>
            <person name="Garner P."/>
            <person name="Kelly D."/>
            <person name="Bird C."/>
            <person name="Palmer S."/>
            <person name="Gehring I."/>
            <person name="Berger A."/>
            <person name="Dooley C.M."/>
            <person name="Ersan-Urun Z."/>
            <person name="Eser C."/>
            <person name="Geiger H."/>
            <person name="Geisler M."/>
            <person name="Karotki L."/>
            <person name="Kirn A."/>
            <person name="Konantz J."/>
            <person name="Konantz M."/>
            <person name="Oberlander M."/>
            <person name="Rudolph-Geiger S."/>
            <person name="Teucke M."/>
            <person name="Lanz C."/>
            <person name="Raddatz G."/>
            <person name="Osoegawa K."/>
            <person name="Zhu B."/>
            <person name="Rapp A."/>
            <person name="Widaa S."/>
            <person name="Langford C."/>
            <person name="Yang F."/>
            <person name="Schuster S.C."/>
            <person name="Carter N.P."/>
            <person name="Harrow J."/>
            <person name="Ning Z."/>
            <person name="Herrero J."/>
            <person name="Searle S.M."/>
            <person name="Enright A."/>
            <person name="Geisler R."/>
            <person name="Plasterk R.H."/>
            <person name="Lee C."/>
            <person name="Westerfield M."/>
            <person name="de Jong P.J."/>
            <person name="Zon L.I."/>
            <person name="Postlethwait J.H."/>
            <person name="Nusslein-Volhard C."/>
            <person name="Hubbard T.J."/>
            <person name="Roest Crollius H."/>
            <person name="Rogers J."/>
            <person name="Stemple D.L."/>
        </authorList>
    </citation>
    <scope>NUCLEOTIDE SEQUENCE [LARGE SCALE GENOMIC DNA]</scope>
    <source>
        <strain>Tuebingen</strain>
    </source>
</reference>
<reference key="2">
    <citation type="submission" date="2005-03" db="EMBL/GenBank/DDBJ databases">
        <authorList>
            <consortium name="NIH - Zebrafish Gene Collection (ZGC) project"/>
        </authorList>
    </citation>
    <scope>NUCLEOTIDE SEQUENCE [LARGE SCALE MRNA]</scope>
    <source>
        <tissue>Embryo</tissue>
    </source>
</reference>
<name>PF23A_DANRE</name>
<gene>
    <name evidence="3" type="primary">phf23a</name>
    <name type="ORF">si:ch211-137i24.4</name>
    <name type="ORF">zgc:112942</name>
</gene>
<dbReference type="EMBL" id="BX119902">
    <property type="protein sequence ID" value="CAM13207.1"/>
    <property type="molecule type" value="Genomic_DNA"/>
</dbReference>
<dbReference type="EMBL" id="BC091667">
    <property type="protein sequence ID" value="AAH91667.1"/>
    <property type="molecule type" value="mRNA"/>
</dbReference>
<dbReference type="RefSeq" id="NP_001013517.1">
    <property type="nucleotide sequence ID" value="NM_001013499.1"/>
</dbReference>
<dbReference type="FunCoup" id="Q5BJ10">
    <property type="interactions" value="404"/>
</dbReference>
<dbReference type="STRING" id="7955.ENSDARP00000042480"/>
<dbReference type="PaxDb" id="7955-ENSDARP00000105631"/>
<dbReference type="Ensembl" id="ENSDART00000042481">
    <property type="protein sequence ID" value="ENSDARP00000042480"/>
    <property type="gene ID" value="ENSDARG00000030887"/>
</dbReference>
<dbReference type="GeneID" id="541372"/>
<dbReference type="KEGG" id="dre:541372"/>
<dbReference type="AGR" id="ZFIN:ZDB-GENE-050320-67"/>
<dbReference type="CTD" id="541372"/>
<dbReference type="ZFIN" id="ZDB-GENE-050320-67">
    <property type="gene designation" value="phf23a"/>
</dbReference>
<dbReference type="eggNOG" id="KOG1844">
    <property type="taxonomic scope" value="Eukaryota"/>
</dbReference>
<dbReference type="HOGENOM" id="CLU_047981_0_0_1"/>
<dbReference type="InParanoid" id="Q5BJ10"/>
<dbReference type="OMA" id="NEGFQKE"/>
<dbReference type="OrthoDB" id="79252at2759"/>
<dbReference type="PhylomeDB" id="Q5BJ10"/>
<dbReference type="TreeFam" id="TF331373"/>
<dbReference type="PRO" id="PR:Q5BJ10"/>
<dbReference type="Proteomes" id="UP000000437">
    <property type="component" value="Alternate scaffold 5"/>
</dbReference>
<dbReference type="Proteomes" id="UP000000437">
    <property type="component" value="Chromosome 5"/>
</dbReference>
<dbReference type="Bgee" id="ENSDARG00000030887">
    <property type="expression patterns" value="Expressed in blastula and 22 other cell types or tissues"/>
</dbReference>
<dbReference type="ExpressionAtlas" id="Q5BJ10">
    <property type="expression patterns" value="baseline"/>
</dbReference>
<dbReference type="GO" id="GO:0005737">
    <property type="term" value="C:cytoplasm"/>
    <property type="evidence" value="ECO:0007669"/>
    <property type="project" value="UniProtKB-SubCell"/>
</dbReference>
<dbReference type="GO" id="GO:0005634">
    <property type="term" value="C:nucleus"/>
    <property type="evidence" value="ECO:0000318"/>
    <property type="project" value="GO_Central"/>
</dbReference>
<dbReference type="GO" id="GO:0008270">
    <property type="term" value="F:zinc ion binding"/>
    <property type="evidence" value="ECO:0007669"/>
    <property type="project" value="UniProtKB-KW"/>
</dbReference>
<dbReference type="GO" id="GO:0006914">
    <property type="term" value="P:autophagy"/>
    <property type="evidence" value="ECO:0007669"/>
    <property type="project" value="UniProtKB-KW"/>
</dbReference>
<dbReference type="GO" id="GO:1902902">
    <property type="term" value="P:negative regulation of autophagosome assembly"/>
    <property type="evidence" value="ECO:0000250"/>
    <property type="project" value="GO_Central"/>
</dbReference>
<dbReference type="GO" id="GO:1901097">
    <property type="term" value="P:negative regulation of autophagosome maturation"/>
    <property type="evidence" value="ECO:0000250"/>
    <property type="project" value="GO_Central"/>
</dbReference>
<dbReference type="GO" id="GO:0031398">
    <property type="term" value="P:positive regulation of protein ubiquitination"/>
    <property type="evidence" value="ECO:0000250"/>
    <property type="project" value="GO_Central"/>
</dbReference>
<dbReference type="Gene3D" id="3.30.40.10">
    <property type="entry name" value="Zinc/RING finger domain, C3HC4 (zinc finger)"/>
    <property type="match status" value="1"/>
</dbReference>
<dbReference type="InterPro" id="IPR019786">
    <property type="entry name" value="Zinc_finger_PHD-type_CS"/>
</dbReference>
<dbReference type="InterPro" id="IPR011011">
    <property type="entry name" value="Znf_FYVE_PHD"/>
</dbReference>
<dbReference type="InterPro" id="IPR001965">
    <property type="entry name" value="Znf_PHD"/>
</dbReference>
<dbReference type="InterPro" id="IPR019787">
    <property type="entry name" value="Znf_PHD-finger"/>
</dbReference>
<dbReference type="InterPro" id="IPR013083">
    <property type="entry name" value="Znf_RING/FYVE/PHD"/>
</dbReference>
<dbReference type="PANTHER" id="PTHR14571">
    <property type="entry name" value="HISTONE-LYSINE N-METHYLTRANSFERASE SET-26-RELATED"/>
    <property type="match status" value="1"/>
</dbReference>
<dbReference type="PANTHER" id="PTHR14571:SF8">
    <property type="entry name" value="PHD FINGER PROTEIN 23"/>
    <property type="match status" value="1"/>
</dbReference>
<dbReference type="Pfam" id="PF13831">
    <property type="entry name" value="PHD_2"/>
    <property type="match status" value="1"/>
</dbReference>
<dbReference type="SMART" id="SM00249">
    <property type="entry name" value="PHD"/>
    <property type="match status" value="1"/>
</dbReference>
<dbReference type="SUPFAM" id="SSF57903">
    <property type="entry name" value="FYVE/PHD zinc finger"/>
    <property type="match status" value="1"/>
</dbReference>
<dbReference type="PROSITE" id="PS01359">
    <property type="entry name" value="ZF_PHD_1"/>
    <property type="match status" value="1"/>
</dbReference>
<comment type="function">
    <text evidence="1">Acts as a negative regulator of autophagy.</text>
</comment>
<comment type="subcellular location">
    <subcellularLocation>
        <location evidence="1">Nucleus</location>
    </subcellularLocation>
    <subcellularLocation>
        <location evidence="1">Cytoplasm</location>
    </subcellularLocation>
</comment>
<comment type="domain">
    <text evidence="1">The PHD-type zinc-finger domain is required for negative regulation of autophagy.</text>
</comment>
<comment type="similarity">
    <text evidence="3">Belongs to the PHF23 family.</text>
</comment>
<evidence type="ECO:0000250" key="1">
    <source>
        <dbReference type="UniProtKB" id="Q9BUL5"/>
    </source>
</evidence>
<evidence type="ECO:0000256" key="2">
    <source>
        <dbReference type="SAM" id="MobiDB-lite"/>
    </source>
</evidence>
<evidence type="ECO:0000305" key="3"/>
<sequence>MLGIMDHHQDTVRKCKSEALPPERRKRTVEDFNKFCSFVLTYAGYIPPQKEESSWSPSSSPCTHDLSELSGEGSVKDSWTDSHSDLNNIHNLVYKAETDSSSSREFSHLPSDNSLDKMTLKDSLNHVHSKAERKKVKKLDRLSLGGPRKSISEARAHKQSKAALKKIKTSIKAERHFTSSSPLNEGFEKEELTEQAIHMHEAGLKLESNQETDLSSCETDTLVTDEDIMVESGDDSWDLITCYCGKPFAGRPMIECEECSIWVHLSCAKIKKSNVPDIFYCYRCLDSRGSTVKRDH</sequence>
<organism>
    <name type="scientific">Danio rerio</name>
    <name type="common">Zebrafish</name>
    <name type="synonym">Brachydanio rerio</name>
    <dbReference type="NCBI Taxonomy" id="7955"/>
    <lineage>
        <taxon>Eukaryota</taxon>
        <taxon>Metazoa</taxon>
        <taxon>Chordata</taxon>
        <taxon>Craniata</taxon>
        <taxon>Vertebrata</taxon>
        <taxon>Euteleostomi</taxon>
        <taxon>Actinopterygii</taxon>
        <taxon>Neopterygii</taxon>
        <taxon>Teleostei</taxon>
        <taxon>Ostariophysi</taxon>
        <taxon>Cypriniformes</taxon>
        <taxon>Danionidae</taxon>
        <taxon>Danioninae</taxon>
        <taxon>Danio</taxon>
    </lineage>
</organism>